<organism>
    <name type="scientific">Rickettsia prowazekii (strain Madrid E)</name>
    <dbReference type="NCBI Taxonomy" id="272947"/>
    <lineage>
        <taxon>Bacteria</taxon>
        <taxon>Pseudomonadati</taxon>
        <taxon>Pseudomonadota</taxon>
        <taxon>Alphaproteobacteria</taxon>
        <taxon>Rickettsiales</taxon>
        <taxon>Rickettsiaceae</taxon>
        <taxon>Rickettsieae</taxon>
        <taxon>Rickettsia</taxon>
        <taxon>typhus group</taxon>
    </lineage>
</organism>
<protein>
    <recommendedName>
        <fullName>Peptide chain release factor 1</fullName>
        <shortName>RF-1</shortName>
    </recommendedName>
</protein>
<dbReference type="EMBL" id="AJ235272">
    <property type="protein sequence ID" value="CAA14978.1"/>
    <property type="molecule type" value="Genomic_DNA"/>
</dbReference>
<dbReference type="PIR" id="H71656">
    <property type="entry name" value="H71656"/>
</dbReference>
<dbReference type="RefSeq" id="NP_220902.1">
    <property type="nucleotide sequence ID" value="NC_000963.1"/>
</dbReference>
<dbReference type="RefSeq" id="WP_004597801.1">
    <property type="nucleotide sequence ID" value="NC_000963.1"/>
</dbReference>
<dbReference type="SMR" id="Q9ZD21"/>
<dbReference type="STRING" id="272947.gene:17555609"/>
<dbReference type="EnsemblBacteria" id="CAA14978">
    <property type="protein sequence ID" value="CAA14978"/>
    <property type="gene ID" value="CAA14978"/>
</dbReference>
<dbReference type="GeneID" id="57569651"/>
<dbReference type="KEGG" id="rpr:RP529"/>
<dbReference type="PATRIC" id="fig|272947.5.peg.537"/>
<dbReference type="eggNOG" id="COG0216">
    <property type="taxonomic scope" value="Bacteria"/>
</dbReference>
<dbReference type="HOGENOM" id="CLU_036856_0_1_5"/>
<dbReference type="OrthoDB" id="9806673at2"/>
<dbReference type="Proteomes" id="UP000002480">
    <property type="component" value="Chromosome"/>
</dbReference>
<dbReference type="GO" id="GO:0005737">
    <property type="term" value="C:cytoplasm"/>
    <property type="evidence" value="ECO:0007669"/>
    <property type="project" value="UniProtKB-SubCell"/>
</dbReference>
<dbReference type="GO" id="GO:0016149">
    <property type="term" value="F:translation release factor activity, codon specific"/>
    <property type="evidence" value="ECO:0007669"/>
    <property type="project" value="UniProtKB-UniRule"/>
</dbReference>
<dbReference type="FunFam" id="3.30.160.20:FF:000004">
    <property type="entry name" value="Peptide chain release factor 1"/>
    <property type="match status" value="1"/>
</dbReference>
<dbReference type="FunFam" id="3.30.70.1660:FF:000002">
    <property type="entry name" value="Peptide chain release factor 1"/>
    <property type="match status" value="1"/>
</dbReference>
<dbReference type="FunFam" id="3.30.70.1660:FF:000004">
    <property type="entry name" value="Peptide chain release factor 1"/>
    <property type="match status" value="1"/>
</dbReference>
<dbReference type="Gene3D" id="3.30.160.20">
    <property type="match status" value="1"/>
</dbReference>
<dbReference type="Gene3D" id="3.30.70.1660">
    <property type="match status" value="1"/>
</dbReference>
<dbReference type="Gene3D" id="6.10.140.1950">
    <property type="match status" value="1"/>
</dbReference>
<dbReference type="HAMAP" id="MF_00093">
    <property type="entry name" value="Rel_fac_1"/>
    <property type="match status" value="1"/>
</dbReference>
<dbReference type="InterPro" id="IPR005139">
    <property type="entry name" value="PCRF"/>
</dbReference>
<dbReference type="InterPro" id="IPR000352">
    <property type="entry name" value="Pep_chain_release_fac_I"/>
</dbReference>
<dbReference type="InterPro" id="IPR045853">
    <property type="entry name" value="Pep_chain_release_fac_I_sf"/>
</dbReference>
<dbReference type="InterPro" id="IPR050057">
    <property type="entry name" value="Prokaryotic/Mito_RF"/>
</dbReference>
<dbReference type="InterPro" id="IPR004373">
    <property type="entry name" value="RF-1"/>
</dbReference>
<dbReference type="NCBIfam" id="TIGR00019">
    <property type="entry name" value="prfA"/>
    <property type="match status" value="1"/>
</dbReference>
<dbReference type="NCBIfam" id="NF001859">
    <property type="entry name" value="PRK00591.1"/>
    <property type="match status" value="1"/>
</dbReference>
<dbReference type="PANTHER" id="PTHR43804">
    <property type="entry name" value="LD18447P"/>
    <property type="match status" value="1"/>
</dbReference>
<dbReference type="PANTHER" id="PTHR43804:SF7">
    <property type="entry name" value="LD18447P"/>
    <property type="match status" value="1"/>
</dbReference>
<dbReference type="Pfam" id="PF03462">
    <property type="entry name" value="PCRF"/>
    <property type="match status" value="1"/>
</dbReference>
<dbReference type="Pfam" id="PF00472">
    <property type="entry name" value="RF-1"/>
    <property type="match status" value="1"/>
</dbReference>
<dbReference type="SMART" id="SM00937">
    <property type="entry name" value="PCRF"/>
    <property type="match status" value="1"/>
</dbReference>
<dbReference type="SUPFAM" id="SSF75620">
    <property type="entry name" value="Release factor"/>
    <property type="match status" value="1"/>
</dbReference>
<dbReference type="PROSITE" id="PS00745">
    <property type="entry name" value="RF_PROK_I"/>
    <property type="match status" value="1"/>
</dbReference>
<keyword id="KW-0963">Cytoplasm</keyword>
<keyword id="KW-0488">Methylation</keyword>
<keyword id="KW-0648">Protein biosynthesis</keyword>
<keyword id="KW-1185">Reference proteome</keyword>
<gene>
    <name type="primary">prfA</name>
    <name type="ordered locus">RP529</name>
</gene>
<sequence>MSFSDNLVKILDKYENLGKKLSSGIIGDEFVKASKEYAELEDVVVKIKQYNKAKSELEEANNFRLEMALDNATLEMIDNEIHTLENLLPKLERAVRISLLPKDEADSKSAIIEVRAGSGGEEAALFAAVLFNMYQRYSEFKGWRFEILAISDTGIGGYKEASASIKGKDVFSKLKFESGVHRVQRIPETESQGRIHTSAATVAVLPEAEGIDIKIEDKDLRIDTYRASGAGGQHVNTTDSAVRITHIPTGITVALQDEKSQHKNKAKALKILRARLYEEKRRQKEQERSDSRRGQVGSGDRSERIRTYNFPQGRVSDHRINLTLYKIDEVVKHGQLDEFIEALIANDEAKKLSEL</sequence>
<evidence type="ECO:0000250" key="1"/>
<evidence type="ECO:0000256" key="2">
    <source>
        <dbReference type="SAM" id="MobiDB-lite"/>
    </source>
</evidence>
<evidence type="ECO:0000305" key="3"/>
<comment type="function">
    <text evidence="1">Peptide chain release factor 1 directs the termination of translation in response to the peptide chain termination codons UAG and UAA.</text>
</comment>
<comment type="subcellular location">
    <subcellularLocation>
        <location evidence="1">Cytoplasm</location>
    </subcellularLocation>
</comment>
<comment type="PTM">
    <text evidence="1">Methylated by PrmC. Methylation increases the termination efficiency of RF1 (By similarity).</text>
</comment>
<comment type="similarity">
    <text evidence="3">Belongs to the prokaryotic/mitochondrial release factor family.</text>
</comment>
<name>RF1_RICPR</name>
<proteinExistence type="inferred from homology"/>
<accession>Q9ZD21</accession>
<feature type="chain" id="PRO_0000177731" description="Peptide chain release factor 1">
    <location>
        <begin position="1"/>
        <end position="355"/>
    </location>
</feature>
<feature type="region of interest" description="Disordered" evidence="2">
    <location>
        <begin position="280"/>
        <end position="310"/>
    </location>
</feature>
<feature type="compositionally biased region" description="Basic and acidic residues" evidence="2">
    <location>
        <begin position="280"/>
        <end position="293"/>
    </location>
</feature>
<feature type="modified residue" description="N5-methylglutamine" evidence="1">
    <location>
        <position position="233"/>
    </location>
</feature>
<reference key="1">
    <citation type="journal article" date="1998" name="Nature">
        <title>The genome sequence of Rickettsia prowazekii and the origin of mitochondria.</title>
        <authorList>
            <person name="Andersson S.G.E."/>
            <person name="Zomorodipour A."/>
            <person name="Andersson J.O."/>
            <person name="Sicheritz-Ponten T."/>
            <person name="Alsmark U.C.M."/>
            <person name="Podowski R.M."/>
            <person name="Naeslund A.K."/>
            <person name="Eriksson A.-S."/>
            <person name="Winkler H.H."/>
            <person name="Kurland C.G."/>
        </authorList>
    </citation>
    <scope>NUCLEOTIDE SEQUENCE [LARGE SCALE GENOMIC DNA]</scope>
    <source>
        <strain>Madrid E</strain>
    </source>
</reference>